<dbReference type="EMBL" id="DP001062">
    <property type="protein sequence ID" value="ACK44303.1"/>
    <property type="molecule type" value="Genomic_DNA"/>
</dbReference>
<dbReference type="RefSeq" id="NP_001164865.1">
    <property type="nucleotide sequence ID" value="NM_001171394.1"/>
</dbReference>
<dbReference type="RefSeq" id="XP_069917939.1">
    <property type="nucleotide sequence ID" value="XM_070061838.1"/>
</dbReference>
<dbReference type="PDB" id="3JAG">
    <property type="method" value="EM"/>
    <property type="resolution" value="3.65 A"/>
    <property type="chains" value="JJ=2-186"/>
</dbReference>
<dbReference type="PDB" id="3JAH">
    <property type="method" value="EM"/>
    <property type="resolution" value="3.45 A"/>
    <property type="chains" value="JJ=2-186"/>
</dbReference>
<dbReference type="PDB" id="3JAI">
    <property type="method" value="EM"/>
    <property type="resolution" value="3.65 A"/>
    <property type="chains" value="JJ=2-186"/>
</dbReference>
<dbReference type="PDB" id="4D5L">
    <property type="method" value="EM"/>
    <property type="resolution" value="9.00 A"/>
    <property type="chains" value="J=1-194"/>
</dbReference>
<dbReference type="PDB" id="4D61">
    <property type="method" value="EM"/>
    <property type="resolution" value="9.00 A"/>
    <property type="chains" value="J=1-194"/>
</dbReference>
<dbReference type="PDB" id="4KZX">
    <property type="method" value="X-ray"/>
    <property type="resolution" value="7.81 A"/>
    <property type="chains" value="J=1-194"/>
</dbReference>
<dbReference type="PDB" id="4KZY">
    <property type="method" value="X-ray"/>
    <property type="resolution" value="7.01 A"/>
    <property type="chains" value="J=1-194"/>
</dbReference>
<dbReference type="PDB" id="4KZZ">
    <property type="method" value="X-ray"/>
    <property type="resolution" value="7.03 A"/>
    <property type="chains" value="J=1-194"/>
</dbReference>
<dbReference type="PDB" id="5K0Y">
    <property type="method" value="EM"/>
    <property type="resolution" value="5.80 A"/>
    <property type="chains" value="K=7-188"/>
</dbReference>
<dbReference type="PDB" id="5LZS">
    <property type="method" value="EM"/>
    <property type="resolution" value="3.31 A"/>
    <property type="chains" value="JJ=1-194"/>
</dbReference>
<dbReference type="PDB" id="5LZT">
    <property type="method" value="EM"/>
    <property type="resolution" value="3.65 A"/>
    <property type="chains" value="JJ=1-194"/>
</dbReference>
<dbReference type="PDB" id="5LZU">
    <property type="method" value="EM"/>
    <property type="resolution" value="3.75 A"/>
    <property type="chains" value="JJ=1-194"/>
</dbReference>
<dbReference type="PDB" id="5LZV">
    <property type="method" value="EM"/>
    <property type="resolution" value="3.35 A"/>
    <property type="chains" value="JJ=1-194"/>
</dbReference>
<dbReference type="PDB" id="5LZW">
    <property type="method" value="EM"/>
    <property type="resolution" value="3.53 A"/>
    <property type="chains" value="JJ=1-194"/>
</dbReference>
<dbReference type="PDB" id="5LZX">
    <property type="method" value="EM"/>
    <property type="resolution" value="3.67 A"/>
    <property type="chains" value="JJ=1-194"/>
</dbReference>
<dbReference type="PDB" id="5LZY">
    <property type="method" value="EM"/>
    <property type="resolution" value="3.99 A"/>
    <property type="chains" value="JJ=1-194"/>
</dbReference>
<dbReference type="PDB" id="5LZZ">
    <property type="method" value="EM"/>
    <property type="resolution" value="3.47 A"/>
    <property type="chains" value="JJ=1-194"/>
</dbReference>
<dbReference type="PDB" id="6D90">
    <property type="method" value="EM"/>
    <property type="resolution" value="3.20 A"/>
    <property type="chains" value="KK=1-194"/>
</dbReference>
<dbReference type="PDB" id="6D9J">
    <property type="method" value="EM"/>
    <property type="resolution" value="3.20 A"/>
    <property type="chains" value="KK=1-194"/>
</dbReference>
<dbReference type="PDB" id="6GZ3">
    <property type="method" value="EM"/>
    <property type="resolution" value="3.60 A"/>
    <property type="chains" value="BJ=2-180"/>
</dbReference>
<dbReference type="PDB" id="6HCF">
    <property type="method" value="EM"/>
    <property type="resolution" value="3.90 A"/>
    <property type="chains" value="K1=1-194"/>
</dbReference>
<dbReference type="PDB" id="6HCJ">
    <property type="method" value="EM"/>
    <property type="resolution" value="3.80 A"/>
    <property type="chains" value="K2=1-194"/>
</dbReference>
<dbReference type="PDB" id="6HCM">
    <property type="method" value="EM"/>
    <property type="resolution" value="6.80 A"/>
    <property type="chains" value="K1=1-194"/>
</dbReference>
<dbReference type="PDB" id="6HCQ">
    <property type="method" value="EM"/>
    <property type="resolution" value="6.50 A"/>
    <property type="chains" value="K2=1-194"/>
</dbReference>
<dbReference type="PDB" id="6MTB">
    <property type="method" value="EM"/>
    <property type="resolution" value="3.60 A"/>
    <property type="chains" value="JJ=2-186"/>
</dbReference>
<dbReference type="PDB" id="6MTC">
    <property type="method" value="EM"/>
    <property type="resolution" value="3.40 A"/>
    <property type="chains" value="JJ=2-186"/>
</dbReference>
<dbReference type="PDB" id="6MTD">
    <property type="method" value="EM"/>
    <property type="resolution" value="3.30 A"/>
    <property type="chains" value="JJ=2-186"/>
</dbReference>
<dbReference type="PDB" id="6MTE">
    <property type="method" value="EM"/>
    <property type="resolution" value="3.40 A"/>
    <property type="chains" value="JJ=2-186"/>
</dbReference>
<dbReference type="PDB" id="6P4G">
    <property type="method" value="EM"/>
    <property type="resolution" value="3.10 A"/>
    <property type="chains" value="K=1-194"/>
</dbReference>
<dbReference type="PDB" id="6P4H">
    <property type="method" value="EM"/>
    <property type="resolution" value="3.20 A"/>
    <property type="chains" value="K=1-194"/>
</dbReference>
<dbReference type="PDB" id="6P5I">
    <property type="method" value="EM"/>
    <property type="resolution" value="3.10 A"/>
    <property type="chains" value="K=1-194"/>
</dbReference>
<dbReference type="PDB" id="6P5J">
    <property type="method" value="EM"/>
    <property type="resolution" value="3.10 A"/>
    <property type="chains" value="K=1-194"/>
</dbReference>
<dbReference type="PDB" id="6P5K">
    <property type="method" value="EM"/>
    <property type="resolution" value="3.10 A"/>
    <property type="chains" value="K=1-194"/>
</dbReference>
<dbReference type="PDB" id="6P5N">
    <property type="method" value="EM"/>
    <property type="resolution" value="3.20 A"/>
    <property type="chains" value="K=1-194"/>
</dbReference>
<dbReference type="PDB" id="6R5Q">
    <property type="method" value="EM"/>
    <property type="resolution" value="3.00 A"/>
    <property type="chains" value="DD=2-186"/>
</dbReference>
<dbReference type="PDB" id="6R6G">
    <property type="method" value="EM"/>
    <property type="resolution" value="3.70 A"/>
    <property type="chains" value="DD=2-186"/>
</dbReference>
<dbReference type="PDB" id="6R6P">
    <property type="method" value="EM"/>
    <property type="resolution" value="3.10 A"/>
    <property type="chains" value="XX=2-186"/>
</dbReference>
<dbReference type="PDB" id="6R7Q">
    <property type="method" value="EM"/>
    <property type="resolution" value="3.90 A"/>
    <property type="chains" value="DD=2-186"/>
</dbReference>
<dbReference type="PDB" id="6SGC">
    <property type="method" value="EM"/>
    <property type="resolution" value="2.80 A"/>
    <property type="chains" value="K1=1-194"/>
</dbReference>
<dbReference type="PDB" id="6W2S">
    <property type="method" value="EM"/>
    <property type="resolution" value="3.00 A"/>
    <property type="chains" value="K=1-194"/>
</dbReference>
<dbReference type="PDB" id="6W2T">
    <property type="method" value="EM"/>
    <property type="resolution" value="3.36 A"/>
    <property type="chains" value="K=1-194"/>
</dbReference>
<dbReference type="PDB" id="6YAL">
    <property type="method" value="EM"/>
    <property type="resolution" value="3.00 A"/>
    <property type="chains" value="L=7-188"/>
</dbReference>
<dbReference type="PDB" id="6YAM">
    <property type="method" value="EM"/>
    <property type="resolution" value="3.60 A"/>
    <property type="chains" value="L=7-188"/>
</dbReference>
<dbReference type="PDB" id="6YAN">
    <property type="method" value="EM"/>
    <property type="resolution" value="3.48 A"/>
    <property type="chains" value="L=7-188"/>
</dbReference>
<dbReference type="PDB" id="6ZVK">
    <property type="method" value="EM"/>
    <property type="resolution" value="3.49 A"/>
    <property type="chains" value="d3=2-186"/>
</dbReference>
<dbReference type="PDB" id="7A01">
    <property type="method" value="EM"/>
    <property type="resolution" value="3.60 A"/>
    <property type="chains" value="d3=2-186"/>
</dbReference>
<dbReference type="PDB" id="7JQB">
    <property type="method" value="EM"/>
    <property type="resolution" value="2.70 A"/>
    <property type="chains" value="K=1-194"/>
</dbReference>
<dbReference type="PDB" id="7JQC">
    <property type="method" value="EM"/>
    <property type="resolution" value="3.30 A"/>
    <property type="chains" value="K=1-194"/>
</dbReference>
<dbReference type="PDB" id="7MDZ">
    <property type="method" value="EM"/>
    <property type="resolution" value="3.20 A"/>
    <property type="chains" value="JJ=1-194"/>
</dbReference>
<dbReference type="PDB" id="7O7Y">
    <property type="method" value="EM"/>
    <property type="resolution" value="2.20 A"/>
    <property type="chains" value="Ai=1-194"/>
</dbReference>
<dbReference type="PDB" id="7O7Z">
    <property type="method" value="EM"/>
    <property type="resolution" value="2.40 A"/>
    <property type="chains" value="Ai=1-194"/>
</dbReference>
<dbReference type="PDB" id="7O80">
    <property type="method" value="EM"/>
    <property type="resolution" value="2.90 A"/>
    <property type="chains" value="Ai=1-194"/>
</dbReference>
<dbReference type="PDB" id="7O81">
    <property type="method" value="EM"/>
    <property type="resolution" value="3.10 A"/>
    <property type="chains" value="Ai=1-194"/>
</dbReference>
<dbReference type="PDB" id="7OYD">
    <property type="method" value="EM"/>
    <property type="resolution" value="2.30 A"/>
    <property type="chains" value="JJ=1-194"/>
</dbReference>
<dbReference type="PDB" id="7SYG">
    <property type="method" value="EM"/>
    <property type="resolution" value="4.30 A"/>
    <property type="chains" value="K=1-194"/>
</dbReference>
<dbReference type="PDB" id="7SYH">
    <property type="method" value="EM"/>
    <property type="resolution" value="4.60 A"/>
    <property type="chains" value="K=1-194"/>
</dbReference>
<dbReference type="PDB" id="7SYI">
    <property type="method" value="EM"/>
    <property type="resolution" value="4.50 A"/>
    <property type="chains" value="K=1-194"/>
</dbReference>
<dbReference type="PDB" id="7SYJ">
    <property type="method" value="EM"/>
    <property type="resolution" value="4.80 A"/>
    <property type="chains" value="K=1-194"/>
</dbReference>
<dbReference type="PDB" id="7SYK">
    <property type="method" value="EM"/>
    <property type="resolution" value="4.20 A"/>
    <property type="chains" value="K=1-194"/>
</dbReference>
<dbReference type="PDB" id="7SYL">
    <property type="method" value="EM"/>
    <property type="resolution" value="4.50 A"/>
    <property type="chains" value="K=1-194"/>
</dbReference>
<dbReference type="PDB" id="7SYM">
    <property type="method" value="EM"/>
    <property type="resolution" value="4.80 A"/>
    <property type="chains" value="K=1-194"/>
</dbReference>
<dbReference type="PDB" id="7SYN">
    <property type="method" value="EM"/>
    <property type="resolution" value="4.00 A"/>
    <property type="chains" value="K=1-194"/>
</dbReference>
<dbReference type="PDB" id="7SYO">
    <property type="method" value="EM"/>
    <property type="resolution" value="4.60 A"/>
    <property type="chains" value="K=1-194"/>
</dbReference>
<dbReference type="PDB" id="7SYP">
    <property type="method" value="EM"/>
    <property type="resolution" value="4.00 A"/>
    <property type="chains" value="K=1-194"/>
</dbReference>
<dbReference type="PDB" id="7SYQ">
    <property type="method" value="EM"/>
    <property type="resolution" value="3.80 A"/>
    <property type="chains" value="K=1-194"/>
</dbReference>
<dbReference type="PDB" id="7SYR">
    <property type="method" value="EM"/>
    <property type="resolution" value="3.60 A"/>
    <property type="chains" value="K=1-194"/>
</dbReference>
<dbReference type="PDB" id="7SYS">
    <property type="method" value="EM"/>
    <property type="resolution" value="3.50 A"/>
    <property type="chains" value="K=1-194"/>
</dbReference>
<dbReference type="PDB" id="7SYT">
    <property type="method" value="EM"/>
    <property type="resolution" value="4.40 A"/>
    <property type="chains" value="K=1-194"/>
</dbReference>
<dbReference type="PDB" id="7SYU">
    <property type="method" value="EM"/>
    <property type="resolution" value="4.60 A"/>
    <property type="chains" value="K=1-194"/>
</dbReference>
<dbReference type="PDB" id="7SYV">
    <property type="method" value="EM"/>
    <property type="resolution" value="3.90 A"/>
    <property type="chains" value="K=1-194"/>
</dbReference>
<dbReference type="PDB" id="7SYW">
    <property type="method" value="EM"/>
    <property type="resolution" value="3.70 A"/>
    <property type="chains" value="K=1-194"/>
</dbReference>
<dbReference type="PDB" id="7SYX">
    <property type="method" value="EM"/>
    <property type="resolution" value="3.70 A"/>
    <property type="chains" value="K=1-194"/>
</dbReference>
<dbReference type="PDB" id="7TOQ">
    <property type="method" value="EM"/>
    <property type="resolution" value="3.10 A"/>
    <property type="chains" value="AS09=2-186"/>
</dbReference>
<dbReference type="PDB" id="7TOR">
    <property type="method" value="EM"/>
    <property type="resolution" value="2.90 A"/>
    <property type="chains" value="AS09=2-186"/>
</dbReference>
<dbReference type="PDB" id="7UCJ">
    <property type="method" value="EM"/>
    <property type="resolution" value="3.10 A"/>
    <property type="chains" value="JJ=2-186"/>
</dbReference>
<dbReference type="PDB" id="7UCK">
    <property type="method" value="EM"/>
    <property type="resolution" value="2.80 A"/>
    <property type="chains" value="JJ=2-186"/>
</dbReference>
<dbReference type="PDB" id="7ZJW">
    <property type="method" value="EM"/>
    <property type="resolution" value="2.80 A"/>
    <property type="chains" value="SU=1-194"/>
</dbReference>
<dbReference type="PDB" id="7ZJX">
    <property type="method" value="EM"/>
    <property type="resolution" value="3.10 A"/>
    <property type="chains" value="SU=1-194"/>
</dbReference>
<dbReference type="PDB" id="8BHF">
    <property type="method" value="EM"/>
    <property type="resolution" value="3.10 A"/>
    <property type="chains" value="K3=2-186"/>
</dbReference>
<dbReference type="PDB" id="8BTK">
    <property type="method" value="EM"/>
    <property type="resolution" value="3.50 A"/>
    <property type="chains" value="Ai=1-194"/>
</dbReference>
<dbReference type="PDB" id="8P03">
    <property type="method" value="EM"/>
    <property type="resolution" value="3.04 A"/>
    <property type="chains" value="L=1-194"/>
</dbReference>
<dbReference type="PDB" id="8P09">
    <property type="method" value="EM"/>
    <property type="resolution" value="3.30 A"/>
    <property type="chains" value="L=1-194"/>
</dbReference>
<dbReference type="PDB" id="8P2K">
    <property type="method" value="EM"/>
    <property type="resolution" value="2.90 A"/>
    <property type="chains" value="Ai=1-194"/>
</dbReference>
<dbReference type="PDB" id="8Q7Z">
    <property type="method" value="EM"/>
    <property type="resolution" value="2.50 A"/>
    <property type="chains" value="Ai=1-194"/>
</dbReference>
<dbReference type="PDB" id="8Q87">
    <property type="method" value="EM"/>
    <property type="resolution" value="2.40 A"/>
    <property type="chains" value="Ai=1-194"/>
</dbReference>
<dbReference type="PDB" id="8SCB">
    <property type="method" value="EM"/>
    <property type="resolution" value="2.50 A"/>
    <property type="chains" value="JJ=1-194"/>
</dbReference>
<dbReference type="PDB" id="8VFT">
    <property type="method" value="EM"/>
    <property type="resolution" value="3.30 A"/>
    <property type="chains" value="JJ=1-194"/>
</dbReference>
<dbReference type="PDB" id="9BDL">
    <property type="method" value="EM"/>
    <property type="resolution" value="2.80 A"/>
    <property type="chains" value="AS09=2-186"/>
</dbReference>
<dbReference type="PDB" id="9BDN">
    <property type="method" value="EM"/>
    <property type="resolution" value="3.10 A"/>
    <property type="chains" value="AS09=2-186"/>
</dbReference>
<dbReference type="PDB" id="9BDP">
    <property type="method" value="EM"/>
    <property type="resolution" value="3.70 A"/>
    <property type="chains" value="AS09=2-186"/>
</dbReference>
<dbReference type="PDB" id="9C8K">
    <property type="method" value="EM"/>
    <property type="resolution" value="3.10 A"/>
    <property type="chains" value="J=1-194"/>
</dbReference>
<dbReference type="PDB" id="9F1B">
    <property type="method" value="EM"/>
    <property type="resolution" value="3.01 A"/>
    <property type="chains" value="Ai=1-194"/>
</dbReference>
<dbReference type="PDB" id="9F1C">
    <property type="method" value="EM"/>
    <property type="resolution" value="3.78 A"/>
    <property type="chains" value="Ai=1-194"/>
</dbReference>
<dbReference type="PDB" id="9F1D">
    <property type="method" value="EM"/>
    <property type="resolution" value="3.26 A"/>
    <property type="chains" value="Ai=1-194"/>
</dbReference>
<dbReference type="PDBsum" id="3JAG"/>
<dbReference type="PDBsum" id="3JAH"/>
<dbReference type="PDBsum" id="3JAI"/>
<dbReference type="PDBsum" id="4D5L"/>
<dbReference type="PDBsum" id="4D61"/>
<dbReference type="PDBsum" id="4KZX"/>
<dbReference type="PDBsum" id="4KZY"/>
<dbReference type="PDBsum" id="4KZZ"/>
<dbReference type="PDBsum" id="5K0Y"/>
<dbReference type="PDBsum" id="5LZS"/>
<dbReference type="PDBsum" id="5LZT"/>
<dbReference type="PDBsum" id="5LZU"/>
<dbReference type="PDBsum" id="5LZV"/>
<dbReference type="PDBsum" id="5LZW"/>
<dbReference type="PDBsum" id="5LZX"/>
<dbReference type="PDBsum" id="5LZY"/>
<dbReference type="PDBsum" id="5LZZ"/>
<dbReference type="PDBsum" id="6D90"/>
<dbReference type="PDBsum" id="6D9J"/>
<dbReference type="PDBsum" id="6GZ3"/>
<dbReference type="PDBsum" id="6HCF"/>
<dbReference type="PDBsum" id="6HCJ"/>
<dbReference type="PDBsum" id="6HCM"/>
<dbReference type="PDBsum" id="6HCQ"/>
<dbReference type="PDBsum" id="6MTB"/>
<dbReference type="PDBsum" id="6MTC"/>
<dbReference type="PDBsum" id="6MTD"/>
<dbReference type="PDBsum" id="6MTE"/>
<dbReference type="PDBsum" id="6P4G"/>
<dbReference type="PDBsum" id="6P4H"/>
<dbReference type="PDBsum" id="6P5I"/>
<dbReference type="PDBsum" id="6P5J"/>
<dbReference type="PDBsum" id="6P5K"/>
<dbReference type="PDBsum" id="6P5N"/>
<dbReference type="PDBsum" id="6R5Q"/>
<dbReference type="PDBsum" id="6R6G"/>
<dbReference type="PDBsum" id="6R6P"/>
<dbReference type="PDBsum" id="6R7Q"/>
<dbReference type="PDBsum" id="6SGC"/>
<dbReference type="PDBsum" id="6W2S"/>
<dbReference type="PDBsum" id="6W2T"/>
<dbReference type="PDBsum" id="6YAL"/>
<dbReference type="PDBsum" id="6YAM"/>
<dbReference type="PDBsum" id="6YAN"/>
<dbReference type="PDBsum" id="6ZVK"/>
<dbReference type="PDBsum" id="7A01"/>
<dbReference type="PDBsum" id="7JQB"/>
<dbReference type="PDBsum" id="7JQC"/>
<dbReference type="PDBsum" id="7MDZ"/>
<dbReference type="PDBsum" id="7O7Y"/>
<dbReference type="PDBsum" id="7O7Z"/>
<dbReference type="PDBsum" id="7O80"/>
<dbReference type="PDBsum" id="7O81"/>
<dbReference type="PDBsum" id="7OYD"/>
<dbReference type="PDBsum" id="7SYG"/>
<dbReference type="PDBsum" id="7SYH"/>
<dbReference type="PDBsum" id="7SYI"/>
<dbReference type="PDBsum" id="7SYJ"/>
<dbReference type="PDBsum" id="7SYK"/>
<dbReference type="PDBsum" id="7SYL"/>
<dbReference type="PDBsum" id="7SYM"/>
<dbReference type="PDBsum" id="7SYN"/>
<dbReference type="PDBsum" id="7SYO"/>
<dbReference type="PDBsum" id="7SYP"/>
<dbReference type="PDBsum" id="7SYQ"/>
<dbReference type="PDBsum" id="7SYR"/>
<dbReference type="PDBsum" id="7SYS"/>
<dbReference type="PDBsum" id="7SYT"/>
<dbReference type="PDBsum" id="7SYU"/>
<dbReference type="PDBsum" id="7SYV"/>
<dbReference type="PDBsum" id="7SYW"/>
<dbReference type="PDBsum" id="7SYX"/>
<dbReference type="PDBsum" id="7TOQ"/>
<dbReference type="PDBsum" id="7TOR"/>
<dbReference type="PDBsum" id="7UCJ"/>
<dbReference type="PDBsum" id="7UCK"/>
<dbReference type="PDBsum" id="7ZJW"/>
<dbReference type="PDBsum" id="7ZJX"/>
<dbReference type="PDBsum" id="8BHF"/>
<dbReference type="PDBsum" id="8BTK"/>
<dbReference type="PDBsum" id="8P03"/>
<dbReference type="PDBsum" id="8P09"/>
<dbReference type="PDBsum" id="8P2K"/>
<dbReference type="PDBsum" id="8Q7Z"/>
<dbReference type="PDBsum" id="8Q87"/>
<dbReference type="PDBsum" id="8SCB"/>
<dbReference type="PDBsum" id="8VFT"/>
<dbReference type="PDBsum" id="9BDL"/>
<dbReference type="PDBsum" id="9BDN"/>
<dbReference type="PDBsum" id="9BDP"/>
<dbReference type="PDBsum" id="9C8K"/>
<dbReference type="PDBsum" id="9F1B"/>
<dbReference type="PDBsum" id="9F1C"/>
<dbReference type="PDBsum" id="9F1D"/>
<dbReference type="EMDB" id="EMD-0098"/>
<dbReference type="EMDB" id="EMD-0099"/>
<dbReference type="EMDB" id="EMD-0100"/>
<dbReference type="EMDB" id="EMD-0192"/>
<dbReference type="EMDB" id="EMD-0194"/>
<dbReference type="EMDB" id="EMD-0195"/>
<dbReference type="EMDB" id="EMD-0197"/>
<dbReference type="EMDB" id="EMD-10181"/>
<dbReference type="EMDB" id="EMD-10760"/>
<dbReference type="EMDB" id="EMD-10761"/>
<dbReference type="EMDB" id="EMD-10762"/>
<dbReference type="EMDB" id="EMD-11459"/>
<dbReference type="EMDB" id="EMD-11590"/>
<dbReference type="EMDB" id="EMD-12756"/>
<dbReference type="EMDB" id="EMD-12757"/>
<dbReference type="EMDB" id="EMD-12758"/>
<dbReference type="EMDB" id="EMD-12759"/>
<dbReference type="EMDB" id="EMD-13114"/>
<dbReference type="EMDB" id="EMD-14751"/>
<dbReference type="EMDB" id="EMD-14752"/>
<dbReference type="EMDB" id="EMD-16052"/>
<dbReference type="EMDB" id="EMD-16232"/>
<dbReference type="EMDB" id="EMD-17329"/>
<dbReference type="EMDB" id="EMD-17330"/>
<dbReference type="EMDB" id="EMD-17367"/>
<dbReference type="EMDB" id="EMD-20248"/>
<dbReference type="EMDB" id="EMD-20249"/>
<dbReference type="EMDB" id="EMD-20255"/>
<dbReference type="EMDB" id="EMD-20256"/>
<dbReference type="EMDB" id="EMD-20257"/>
<dbReference type="EMDB" id="EMD-20258"/>
<dbReference type="EMDB" id="EMD-21529"/>
<dbReference type="EMDB" id="EMD-21530"/>
<dbReference type="EMDB" id="EMD-22432"/>
<dbReference type="EMDB" id="EMD-22433"/>
<dbReference type="EMDB" id="EMD-23785"/>
<dbReference type="EMDB" id="EMD-25527"/>
<dbReference type="EMDB" id="EMD-25528"/>
<dbReference type="EMDB" id="EMD-25529"/>
<dbReference type="EMDB" id="EMD-25530"/>
<dbReference type="EMDB" id="EMD-25531"/>
<dbReference type="EMDB" id="EMD-25532"/>
<dbReference type="EMDB" id="EMD-25533"/>
<dbReference type="EMDB" id="EMD-25534"/>
<dbReference type="EMDB" id="EMD-25535"/>
<dbReference type="EMDB" id="EMD-25536"/>
<dbReference type="EMDB" id="EMD-25537"/>
<dbReference type="EMDB" id="EMD-25538"/>
<dbReference type="EMDB" id="EMD-25539"/>
<dbReference type="EMDB" id="EMD-25540"/>
<dbReference type="EMDB" id="EMD-25541"/>
<dbReference type="EMDB" id="EMD-25542"/>
<dbReference type="EMDB" id="EMD-25543"/>
<dbReference type="EMDB" id="EMD-25544"/>
<dbReference type="EMDB" id="EMD-26035"/>
<dbReference type="EMDB" id="EMD-26036"/>
<dbReference type="EMDB" id="EMD-26444"/>
<dbReference type="EMDB" id="EMD-26445"/>
<dbReference type="EMDB" id="EMD-40344"/>
<dbReference type="EMDB" id="EMD-4130"/>
<dbReference type="EMDB" id="EMD-4131"/>
<dbReference type="EMDB" id="EMD-4132"/>
<dbReference type="EMDB" id="EMD-4133"/>
<dbReference type="EMDB" id="EMD-4134"/>
<dbReference type="EMDB" id="EMD-4135"/>
<dbReference type="EMDB" id="EMD-4136"/>
<dbReference type="EMDB" id="EMD-4137"/>
<dbReference type="EMDB" id="EMD-43189"/>
<dbReference type="EMDB" id="EMD-44461"/>
<dbReference type="EMDB" id="EMD-44463"/>
<dbReference type="EMDB" id="EMD-44464"/>
<dbReference type="EMDB" id="EMD-45307"/>
<dbReference type="EMDB" id="EMD-4729"/>
<dbReference type="EMDB" id="EMD-4735"/>
<dbReference type="EMDB" id="EMD-4737"/>
<dbReference type="EMDB" id="EMD-4745"/>
<dbReference type="EMDB" id="EMD-50124"/>
<dbReference type="EMDB" id="EMD-50125"/>
<dbReference type="EMDB" id="EMD-50126"/>
<dbReference type="EMDB" id="EMD-7834"/>
<dbReference type="EMDB" id="EMD-7836"/>
<dbReference type="EMDB" id="EMD-9237"/>
<dbReference type="EMDB" id="EMD-9239"/>
<dbReference type="EMDB" id="EMD-9240"/>
<dbReference type="EMDB" id="EMD-9242"/>
<dbReference type="SMR" id="B7NZS8"/>
<dbReference type="IntAct" id="B7NZS8">
    <property type="interactions" value="1"/>
</dbReference>
<dbReference type="GeneID" id="100328779"/>
<dbReference type="CTD" id="6203"/>
<dbReference type="EvolutionaryTrace" id="B7NZS8"/>
<dbReference type="Proteomes" id="UP000001811">
    <property type="component" value="Unplaced"/>
</dbReference>
<dbReference type="GO" id="GO:0022626">
    <property type="term" value="C:cytosolic ribosome"/>
    <property type="evidence" value="ECO:0000314"/>
    <property type="project" value="UniProtKB"/>
</dbReference>
<dbReference type="GO" id="GO:0022627">
    <property type="term" value="C:cytosolic small ribosomal subunit"/>
    <property type="evidence" value="ECO:0007669"/>
    <property type="project" value="TreeGrafter"/>
</dbReference>
<dbReference type="GO" id="GO:0005730">
    <property type="term" value="C:nucleolus"/>
    <property type="evidence" value="ECO:0007669"/>
    <property type="project" value="UniProtKB-SubCell"/>
</dbReference>
<dbReference type="GO" id="GO:0019843">
    <property type="term" value="F:rRNA binding"/>
    <property type="evidence" value="ECO:0007669"/>
    <property type="project" value="UniProtKB-KW"/>
</dbReference>
<dbReference type="GO" id="GO:0003735">
    <property type="term" value="F:structural constituent of ribosome"/>
    <property type="evidence" value="ECO:0000314"/>
    <property type="project" value="UniProtKB"/>
</dbReference>
<dbReference type="GO" id="GO:0042274">
    <property type="term" value="P:ribosomal small subunit biogenesis"/>
    <property type="evidence" value="ECO:0007669"/>
    <property type="project" value="TreeGrafter"/>
</dbReference>
<dbReference type="GO" id="GO:0006412">
    <property type="term" value="P:translation"/>
    <property type="evidence" value="ECO:0007669"/>
    <property type="project" value="InterPro"/>
</dbReference>
<dbReference type="CDD" id="cd00165">
    <property type="entry name" value="S4"/>
    <property type="match status" value="1"/>
</dbReference>
<dbReference type="FunFam" id="3.10.290.10:FF:000021">
    <property type="entry name" value="40S ribosomal protein S9"/>
    <property type="match status" value="1"/>
</dbReference>
<dbReference type="Gene3D" id="3.10.290.10">
    <property type="entry name" value="RNA-binding S4 domain"/>
    <property type="match status" value="1"/>
</dbReference>
<dbReference type="InterPro" id="IPR022801">
    <property type="entry name" value="Ribosomal_uS4"/>
</dbReference>
<dbReference type="InterPro" id="IPR018079">
    <property type="entry name" value="Ribosomal_uS4_CS"/>
</dbReference>
<dbReference type="InterPro" id="IPR005710">
    <property type="entry name" value="Ribosomal_uS4_euk/arc"/>
</dbReference>
<dbReference type="InterPro" id="IPR001912">
    <property type="entry name" value="Ribosomal_uS4_N"/>
</dbReference>
<dbReference type="InterPro" id="IPR002942">
    <property type="entry name" value="S4_RNA-bd"/>
</dbReference>
<dbReference type="InterPro" id="IPR036986">
    <property type="entry name" value="S4_RNA-bd_sf"/>
</dbReference>
<dbReference type="NCBIfam" id="NF003139">
    <property type="entry name" value="PRK04051.1"/>
    <property type="match status" value="1"/>
</dbReference>
<dbReference type="NCBIfam" id="TIGR01018">
    <property type="entry name" value="uS4_arch"/>
    <property type="match status" value="1"/>
</dbReference>
<dbReference type="PANTHER" id="PTHR11831">
    <property type="entry name" value="30S 40S RIBOSOMAL PROTEIN"/>
    <property type="match status" value="1"/>
</dbReference>
<dbReference type="PANTHER" id="PTHR11831:SF46">
    <property type="entry name" value="SMALL RIBOSOMAL SUBUNIT PROTEIN US4"/>
    <property type="match status" value="1"/>
</dbReference>
<dbReference type="Pfam" id="PF00163">
    <property type="entry name" value="Ribosomal_S4"/>
    <property type="match status" value="1"/>
</dbReference>
<dbReference type="Pfam" id="PF01479">
    <property type="entry name" value="S4"/>
    <property type="match status" value="1"/>
</dbReference>
<dbReference type="SMART" id="SM01390">
    <property type="entry name" value="Ribosomal_S4"/>
    <property type="match status" value="1"/>
</dbReference>
<dbReference type="SMART" id="SM00363">
    <property type="entry name" value="S4"/>
    <property type="match status" value="1"/>
</dbReference>
<dbReference type="SUPFAM" id="SSF55174">
    <property type="entry name" value="Alpha-L RNA-binding motif"/>
    <property type="match status" value="1"/>
</dbReference>
<dbReference type="PROSITE" id="PS00632">
    <property type="entry name" value="RIBOSOMAL_S4"/>
    <property type="match status" value="1"/>
</dbReference>
<dbReference type="PROSITE" id="PS50889">
    <property type="entry name" value="S4"/>
    <property type="match status" value="1"/>
</dbReference>
<reference key="1">
    <citation type="journal article" date="2011" name="Nature">
        <title>A high-resolution map of human evolutionary constraint using 29 mammals.</title>
        <authorList>
            <person name="Lindblad-Toh K."/>
            <person name="Garber M."/>
            <person name="Zuk O."/>
            <person name="Lin M.F."/>
            <person name="Parker B.J."/>
            <person name="Washietl S."/>
            <person name="Kheradpour P."/>
            <person name="Ernst J."/>
            <person name="Jordan G."/>
            <person name="Mauceli E."/>
            <person name="Ward L.D."/>
            <person name="Lowe C.B."/>
            <person name="Holloway A.K."/>
            <person name="Clamp M."/>
            <person name="Gnerre S."/>
            <person name="Alfoldi J."/>
            <person name="Beal K."/>
            <person name="Chang J."/>
            <person name="Clawson H."/>
            <person name="Cuff J."/>
            <person name="Di Palma F."/>
            <person name="Fitzgerald S."/>
            <person name="Flicek P."/>
            <person name="Guttman M."/>
            <person name="Hubisz M.J."/>
            <person name="Jaffe D.B."/>
            <person name="Jungreis I."/>
            <person name="Kent W.J."/>
            <person name="Kostka D."/>
            <person name="Lara M."/>
            <person name="Martins A.L."/>
            <person name="Massingham T."/>
            <person name="Moltke I."/>
            <person name="Raney B.J."/>
            <person name="Rasmussen M.D."/>
            <person name="Robinson J."/>
            <person name="Stark A."/>
            <person name="Vilella A.J."/>
            <person name="Wen J."/>
            <person name="Xie X."/>
            <person name="Zody M.C."/>
            <person name="Baldwin J."/>
            <person name="Bloom T."/>
            <person name="Chin C.W."/>
            <person name="Heiman D."/>
            <person name="Nicol R."/>
            <person name="Nusbaum C."/>
            <person name="Young S."/>
            <person name="Wilkinson J."/>
            <person name="Worley K.C."/>
            <person name="Kovar C.L."/>
            <person name="Muzny D.M."/>
            <person name="Gibbs R.A."/>
            <person name="Cree A."/>
            <person name="Dihn H.H."/>
            <person name="Fowler G."/>
            <person name="Jhangiani S."/>
            <person name="Joshi V."/>
            <person name="Lee S."/>
            <person name="Lewis L.R."/>
            <person name="Nazareth L.V."/>
            <person name="Okwuonu G."/>
            <person name="Santibanez J."/>
            <person name="Warren W.C."/>
            <person name="Mardis E.R."/>
            <person name="Weinstock G.M."/>
            <person name="Wilson R.K."/>
            <person name="Delehaunty K."/>
            <person name="Dooling D."/>
            <person name="Fronik C."/>
            <person name="Fulton L."/>
            <person name="Fulton B."/>
            <person name="Graves T."/>
            <person name="Minx P."/>
            <person name="Sodergren E."/>
            <person name="Birney E."/>
            <person name="Margulies E.H."/>
            <person name="Herrero J."/>
            <person name="Green E.D."/>
            <person name="Haussler D."/>
            <person name="Siepel A."/>
            <person name="Goldman N."/>
            <person name="Pollard K.S."/>
            <person name="Pedersen J.S."/>
            <person name="Lander E.S."/>
            <person name="Kellis M."/>
        </authorList>
    </citation>
    <scope>NUCLEOTIDE SEQUENCE [LARGE SCALE GENOMIC DNA]</scope>
    <source>
        <strain>Thorbecke</strain>
    </source>
</reference>
<reference evidence="27 28" key="2">
    <citation type="journal article" date="2013" name="Nature">
        <title>The initiation of mammalian protein synthesis and mRNA scanning mechanism.</title>
        <authorList>
            <person name="Lomakin I.B."/>
            <person name="Steitz T.A."/>
        </authorList>
    </citation>
    <scope>X-RAY CRYSTALLOGRAPHY (7.01 ANGSTROMS) OF 40S RIBOSOME</scope>
    <scope>FUNCTION</scope>
    <scope>SUBUNIT</scope>
    <scope>SUBCELLULAR LOCATION</scope>
</reference>
<reference evidence="25 26" key="3">
    <citation type="journal article" date="2015" name="Mol. Cell">
        <title>Cryo-EM of ribosomal 80S complexes with termination factors reveals the translocated cricket paralysis virus IRES.</title>
        <authorList>
            <person name="Muhs M."/>
            <person name="Hilal T."/>
            <person name="Mielke T."/>
            <person name="Skabkin M.A."/>
            <person name="Sanbonmatsu K.Y."/>
            <person name="Pestova T.V."/>
            <person name="Spahn C.M."/>
        </authorList>
    </citation>
    <scope>STRUCTURE BY ELECTRON MICROSCOPY (9.00 ANGSTROMS) OF RIBOSOME</scope>
    <scope>FUNCTION</scope>
    <scope>SUBUNIT</scope>
    <scope>SUBCELLULAR LOCATION</scope>
</reference>
<reference evidence="23 24" key="4">
    <citation type="journal article" date="2015" name="Nature">
        <title>Structural basis for stop codon recognition in eukaryotes.</title>
        <authorList>
            <person name="Brown A."/>
            <person name="Shao S."/>
            <person name="Murray J."/>
            <person name="Hegde R.S."/>
            <person name="Ramakrishnan V."/>
        </authorList>
    </citation>
    <scope>STRUCTURE BY ELECTRON MICROSCOPY (3.45 ANGSTROMS) OF 14-204 OF RIBOSOME</scope>
    <scope>SUBUNIT</scope>
    <scope>SUBCELLULAR LOCATION</scope>
</reference>
<reference evidence="29 30" key="5">
    <citation type="journal article" date="2016" name="Cell">
        <title>Decoding mammalian ribosome-mRNA states by translational GTPase complexes.</title>
        <authorList>
            <person name="Shao S."/>
            <person name="Murray J."/>
            <person name="Brown A."/>
            <person name="Taunton J."/>
            <person name="Ramakrishnan V."/>
            <person name="Hegde R.S."/>
        </authorList>
    </citation>
    <scope>STRUCTURE BY ELECTRON MICROSCOPY (3.31 ANGSTROMS) OF RIBOSOME</scope>
    <scope>FUNCTION</scope>
    <scope>SUBUNIT</scope>
    <scope>SUBCELLULAR LOCATION</scope>
</reference>
<reference evidence="33" key="6">
    <citation type="journal article" date="2018" name="Cell Rep.">
        <title>tRNA translocation by the eukaryotic 80S ribosome and the impact of GTP hydrolysis.</title>
        <authorList>
            <person name="Flis J."/>
            <person name="Holm M."/>
            <person name="Rundlet E.J."/>
            <person name="Loerke J."/>
            <person name="Hilal T."/>
            <person name="Dabrowski M."/>
            <person name="Burger J."/>
            <person name="Mielke T."/>
            <person name="Blanchard S.C."/>
            <person name="Spahn C.M.T."/>
            <person name="Budkevich T.V."/>
        </authorList>
    </citation>
    <scope>STRUCTURE BY ELECTRON MICROSCOPY (3.60 ANGSTROMS) OF 1-180 OF RIBOSOME</scope>
    <scope>FUNCTION</scope>
    <scope>SUBCELLULAR LOCATION</scope>
    <scope>SUBUNIT</scope>
</reference>
<reference evidence="31 32" key="7">
    <citation type="journal article" date="2018" name="Elife">
        <title>Dual tRNA mimicry in the Cricket paralysis virus IRES uncovers an unexpected similarity with the Hepatitis C Virus IRES.</title>
        <authorList>
            <person name="Pisareva V.P."/>
            <person name="Pisarev A.V."/>
            <person name="Fernandez I.S."/>
        </authorList>
    </citation>
    <scope>STRUCTURE BY ELECTRON MICROSCOPY (3.20 ANGSTROMS) OF RIBOSOME</scope>
    <scope>SUBUNIT</scope>
    <scope>SUBCELLULAR LOCATION</scope>
</reference>
<reference evidence="36 37" key="8">
    <citation type="journal article" date="2018" name="Elife">
        <title>Structures of translationally inactive mammalian ribosomes.</title>
        <authorList>
            <person name="Brown A."/>
            <person name="Baird M.R."/>
            <person name="Yip M.C."/>
            <person name="Murray J."/>
            <person name="Shao S."/>
        </authorList>
    </citation>
    <scope>STRUCTURE BY ELECTRON MICROSCOPY (3.30 ANGSTROMS) OF RIBOSOME</scope>
    <scope>SUBUNIT</scope>
    <scope>SUBCELLULAR LOCATION</scope>
</reference>
<reference evidence="34 35" key="9">
    <citation type="journal article" date="2018" name="Mol. Cell">
        <title>ZNF598 is a quality control sensor of collided ribosomes.</title>
        <authorList>
            <person name="Juszkiewicz S."/>
            <person name="Chandrasekaran V."/>
            <person name="Lin Z."/>
            <person name="Kraatz S."/>
            <person name="Ramakrishnan V."/>
            <person name="Hegde R.S."/>
        </authorList>
    </citation>
    <scope>STRUCTURE BY ELECTRON MICROSCOPY (3.80 ANGSTROMS) OF RIBOSOME</scope>
    <scope>SUBUNIT</scope>
    <scope>SUBCELLULAR LOCATION</scope>
</reference>
<reference evidence="40 41" key="10">
    <citation type="journal article" date="2019" name="Elife">
        <title>Structural and mutational analysis of the ribosome-arresting human XBP1u.</title>
        <authorList>
            <person name="Shanmuganathan V."/>
            <person name="Schiller N."/>
            <person name="Magoulopoulou A."/>
            <person name="Cheng J."/>
            <person name="Braunger K."/>
            <person name="Cymer F."/>
            <person name="Berninghausen O."/>
            <person name="Beatrix B."/>
            <person name="Kohno K."/>
            <person name="von Heijne G."/>
            <person name="Beckmann R."/>
        </authorList>
    </citation>
    <scope>STRUCTURE BY ELECTRON MICROSCOPY (3.00 ANGSTROMS) OF 2-186 OF RIBOSOME</scope>
    <scope>SUBUNIT</scope>
    <scope>SUBCELLULAR LOCATION</scope>
</reference>
<reference evidence="38 39" key="11">
    <citation type="journal article" date="2019" name="EMBO J.">
        <title>The Israeli acute paralysis virus IRES captures host ribosomes by mimicking a ribosomal state with hybrid tRNAs.</title>
        <authorList>
            <person name="Acosta-Reyes F."/>
            <person name="Neupane R."/>
            <person name="Frank J."/>
            <person name="Fernandez I.S."/>
        </authorList>
    </citation>
    <scope>STRUCTURE BY ELECTRON MICROSCOPY (3.10 ANGSTROMS) OF RIBOSOME</scope>
    <scope>SUBUNIT</scope>
    <scope>SUBCELLULAR LOCATION</scope>
</reference>
<reference evidence="42" key="12">
    <citation type="journal article" date="2019" name="Nat. Struct. Mol. Biol.">
        <title>Mechanism of ribosome stalling during translation of a poly(A) tail.</title>
        <authorList>
            <person name="Chandrasekaran V."/>
            <person name="Juszkiewicz S."/>
            <person name="Choi J."/>
            <person name="Puglisi J.D."/>
            <person name="Brown A."/>
            <person name="Shao S."/>
            <person name="Ramakrishnan V."/>
            <person name="Hegde R.S."/>
        </authorList>
    </citation>
    <scope>STRUCTURE BY ELECTRON MICROSCOPY (2.80 ANGSTROMS) OF RIBOSOME</scope>
    <scope>SUBUNIT</scope>
    <scope>SUBCELLULAR LOCATION</scope>
</reference>
<reference evidence="45 46" key="13">
    <citation type="journal article" date="2020" name="Cell Rep.">
        <title>The Halastavi arva virus intergenic region IRES promotes translation by the simplest possible initiation mechanism.</title>
        <authorList>
            <person name="Abaeva I.S."/>
            <person name="Vicens Q."/>
            <person name="Bochler A."/>
            <person name="Soufari H."/>
            <person name="Simonetti A."/>
            <person name="Pestova T.V."/>
            <person name="Hashem Y."/>
            <person name="Hellen C.U.T."/>
        </authorList>
    </citation>
    <scope>STRUCTURE BY ELECTRON MICROSCOPY (3.49 ANGSTROMS) OF 2-186 AND 113-214 OF RIBOSOME</scope>
    <scope>SUBCELLULAR LOCATION</scope>
    <scope>SUBUNIT</scope>
</reference>
<reference evidence="43 44" key="14">
    <citation type="journal article" date="2020" name="Elife">
        <title>A complex IRES at the 5'-UTR of a viral mRNA assembles a functional 48S complex via an uAUG intermediate.</title>
        <authorList>
            <person name="Neupane R."/>
            <person name="Pisareva V.P."/>
            <person name="Rodriguez C.F."/>
            <person name="Pisarev A.V."/>
            <person name="Fernandez I.S."/>
        </authorList>
    </citation>
    <scope>STRUCTURE BY ELECTRON MICROSCOPY (3.00 ANGSTROMS) OF RIBOSOME</scope>
    <scope>SUBCELLULAR LOCATION</scope>
    <scope>SUBUNIT</scope>
</reference>
<reference evidence="48 49" key="15">
    <citation type="journal article" date="2022" name="EMBO J.">
        <title>Molecular architecture of 40S translation initiation complexes on the hepatitis C virus IRES.</title>
        <authorList>
            <person name="Brown Z.P."/>
            <person name="Abaeva I.S."/>
            <person name="De S."/>
            <person name="Hellen C.U.T."/>
            <person name="Pestova T.V."/>
            <person name="Frank J."/>
        </authorList>
    </citation>
    <scope>STRUCTURE BY ELECTRON MICROSCOPY (3.50 ANGSTROMS) OF RIBOSOME</scope>
    <scope>SUBCELLULAR LOCATION</scope>
    <scope>SUBUNIT</scope>
</reference>
<reference evidence="50 51" key="16">
    <citation type="journal article" date="2022" name="Mol. Cell">
        <title>Direct epitranscriptomic regulation of mammalian translation initiation through N4-acetylcytidine.</title>
        <authorList>
            <person name="Arango D."/>
            <person name="Sturgill D."/>
            <person name="Yang R."/>
            <person name="Kanai T."/>
            <person name="Bauer P."/>
            <person name="Roy J."/>
            <person name="Wang Z."/>
            <person name="Hosogane M."/>
            <person name="Schiffers S."/>
            <person name="Oberdoerffer S."/>
        </authorList>
    </citation>
    <scope>STRUCTURE BY ELECTRON MICROSCOPY (2.80 ANGSTROMS) OF 2-186 OF RIBOSOME</scope>
    <scope>SUBCELLULAR LOCATION</scope>
    <scope>SUBUNIT</scope>
</reference>
<reference evidence="52 53" key="17">
    <citation type="journal article" date="2022" name="Science">
        <title>Structure of the mammalian ribosome as it decodes the selenocysteine UGA codon.</title>
        <authorList>
            <person name="Hilal T."/>
            <person name="Killam B.Y."/>
            <person name="Grozdanovic M."/>
            <person name="Dobosz-Bartoszek M."/>
            <person name="Loerke J."/>
            <person name="Buerger J."/>
            <person name="Mielke T."/>
            <person name="Copeland P.R."/>
            <person name="Simonovic M."/>
            <person name="Spahn C.M.T."/>
        </authorList>
    </citation>
    <scope>STRUCTURE BY ELECTRON MICROSCOPY (2.80 ANGSTROMS) OF RIBOSOME</scope>
    <scope>SUBCELLULAR LOCATION</scope>
    <scope>SUBUNIT</scope>
</reference>
<reference evidence="47" key="18">
    <citation type="journal article" date="2023" name="Nature">
        <title>A molecular network of conserved factors keeps ribosomes dormant in the egg.</title>
        <authorList>
            <person name="Leesch F."/>
            <person name="Lorenzo-Orts L."/>
            <person name="Pribitzer C."/>
            <person name="Grishkovskaya I."/>
            <person name="Roehsner J."/>
            <person name="Chugunova A."/>
            <person name="Matzinger M."/>
            <person name="Roitinger E."/>
            <person name="Belacic K."/>
            <person name="Kandolf S."/>
            <person name="Lin T.Y."/>
            <person name="Mechtler K."/>
            <person name="Meinhart A."/>
            <person name="Haselbach D."/>
            <person name="Pauli A."/>
        </authorList>
    </citation>
    <scope>STRUCTURE BY ELECTRON MICROSCOPY (2.30 ANGSTROMS) OF RIBOSOME</scope>
    <scope>SUBCELLULAR LOCATION</scope>
    <scope>SUBUNIT</scope>
</reference>
<accession>B7NZS8</accession>
<feature type="initiator methionine" description="Removed" evidence="1">
    <location>
        <position position="1"/>
    </location>
</feature>
<feature type="chain" id="PRO_0000460059" description="Small ribosomal subunit protein uS4">
    <location>
        <begin position="2"/>
        <end position="194"/>
    </location>
</feature>
<feature type="domain" description="S4 RNA-binding" evidence="3">
    <location>
        <begin position="108"/>
        <end position="182"/>
    </location>
</feature>
<feature type="region of interest" description="Disordered" evidence="4">
    <location>
        <begin position="162"/>
        <end position="194"/>
    </location>
</feature>
<feature type="modified residue" description="N6-acetyllysine" evidence="2">
    <location>
        <position position="66"/>
    </location>
</feature>
<feature type="modified residue" description="N6-acetyllysine" evidence="2">
    <location>
        <position position="116"/>
    </location>
</feature>
<feature type="modified residue" description="Phosphoserine" evidence="1">
    <location>
        <position position="153"/>
    </location>
</feature>
<feature type="modified residue" description="N6-acetyllysine" evidence="1">
    <location>
        <position position="155"/>
    </location>
</feature>
<feature type="modified residue" description="Phosphoserine" evidence="1">
    <location>
        <position position="163"/>
    </location>
</feature>
<feature type="cross-link" description="Glycyl lysine isopeptide (Lys-Gly) (interchain with G-Cter in SUMO2)" evidence="1">
    <location>
        <position position="93"/>
    </location>
</feature>
<feature type="cross-link" description="Glycyl lysine isopeptide (Lys-Gly) (interchain with G-Cter in SUMO2)" evidence="1">
    <location>
        <position position="139"/>
    </location>
</feature>
<feature type="strand" evidence="54">
    <location>
        <begin position="17"/>
        <end position="19"/>
    </location>
</feature>
<feature type="helix" evidence="56">
    <location>
        <begin position="22"/>
        <end position="35"/>
    </location>
</feature>
<feature type="strand" evidence="58">
    <location>
        <begin position="38"/>
        <end position="40"/>
    </location>
</feature>
<feature type="helix" evidence="56">
    <location>
        <begin position="41"/>
        <end position="60"/>
    </location>
</feature>
<feature type="helix" evidence="56">
    <location>
        <begin position="68"/>
        <end position="83"/>
    </location>
</feature>
<feature type="helix" evidence="56">
    <location>
        <begin position="89"/>
        <end position="91"/>
    </location>
</feature>
<feature type="helix" evidence="56">
    <location>
        <begin position="94"/>
        <end position="96"/>
    </location>
</feature>
<feature type="helix" evidence="57">
    <location>
        <begin position="97"/>
        <end position="99"/>
    </location>
</feature>
<feature type="helix" evidence="56">
    <location>
        <begin position="103"/>
        <end position="106"/>
    </location>
</feature>
<feature type="helix" evidence="56">
    <location>
        <begin position="110"/>
        <end position="116"/>
    </location>
</feature>
<feature type="strand" evidence="56">
    <location>
        <begin position="119"/>
        <end position="122"/>
    </location>
</feature>
<feature type="helix" evidence="56">
    <location>
        <begin position="123"/>
        <end position="130"/>
    </location>
</feature>
<feature type="turn" evidence="56">
    <location>
        <begin position="131"/>
        <end position="133"/>
    </location>
</feature>
<feature type="strand" evidence="56">
    <location>
        <begin position="135"/>
        <end position="139"/>
    </location>
</feature>
<feature type="helix" evidence="55">
    <location>
        <begin position="151"/>
        <end position="153"/>
    </location>
</feature>
<feature type="helix" evidence="56">
    <location>
        <begin position="154"/>
        <end position="156"/>
    </location>
</feature>
<feature type="strand" evidence="56">
    <location>
        <begin position="157"/>
        <end position="159"/>
    </location>
</feature>
<feature type="turn" evidence="56">
    <location>
        <begin position="164"/>
        <end position="167"/>
    </location>
</feature>
<feature type="helix" evidence="56">
    <location>
        <begin position="174"/>
        <end position="182"/>
    </location>
</feature>
<feature type="helix" evidence="56">
    <location>
        <begin position="183"/>
        <end position="185"/>
    </location>
</feature>
<gene>
    <name type="primary">RPS9</name>
</gene>
<organism>
    <name type="scientific">Oryctolagus cuniculus</name>
    <name type="common">Rabbit</name>
    <dbReference type="NCBI Taxonomy" id="9986"/>
    <lineage>
        <taxon>Eukaryota</taxon>
        <taxon>Metazoa</taxon>
        <taxon>Chordata</taxon>
        <taxon>Craniata</taxon>
        <taxon>Vertebrata</taxon>
        <taxon>Euteleostomi</taxon>
        <taxon>Mammalia</taxon>
        <taxon>Eutheria</taxon>
        <taxon>Euarchontoglires</taxon>
        <taxon>Glires</taxon>
        <taxon>Lagomorpha</taxon>
        <taxon>Leporidae</taxon>
        <taxon>Oryctolagus</taxon>
    </lineage>
</organism>
<sequence length="194" mass="22591">MPVARSWVCRKTYVTPRRPFEKSRLDQELKLIGEYGLRNKREVWRVKFTLAKIRKAARELLTLDEKDPRRLFEGNALLRRLVRIGVLDEGKMKLDYILGLKIEDFLERRLQTQVFKLGLAKSIHHARVLIRQRHIRVRKQVVNIPSFIVRLDSQKHIDFSLRSPYGGGRPGRVKRKNAKKGQGGAGAGDDEEED</sequence>
<evidence type="ECO:0000250" key="1">
    <source>
        <dbReference type="UniProtKB" id="P46781"/>
    </source>
</evidence>
<evidence type="ECO:0000250" key="2">
    <source>
        <dbReference type="UniProtKB" id="Q6ZWN5"/>
    </source>
</evidence>
<evidence type="ECO:0000255" key="3">
    <source>
        <dbReference type="PROSITE-ProRule" id="PRU00182"/>
    </source>
</evidence>
<evidence type="ECO:0000256" key="4">
    <source>
        <dbReference type="SAM" id="MobiDB-lite"/>
    </source>
</evidence>
<evidence type="ECO:0000269" key="5">
    <source>
    </source>
</evidence>
<evidence type="ECO:0000269" key="6">
    <source>
    </source>
</evidence>
<evidence type="ECO:0000269" key="7">
    <source>
    </source>
</evidence>
<evidence type="ECO:0000269" key="8">
    <source>
    </source>
</evidence>
<evidence type="ECO:0000269" key="9">
    <source>
    </source>
</evidence>
<evidence type="ECO:0000269" key="10">
    <source>
    </source>
</evidence>
<evidence type="ECO:0000269" key="11">
    <source>
    </source>
</evidence>
<evidence type="ECO:0000269" key="12">
    <source>
    </source>
</evidence>
<evidence type="ECO:0000269" key="13">
    <source>
    </source>
</evidence>
<evidence type="ECO:0000269" key="14">
    <source>
    </source>
</evidence>
<evidence type="ECO:0000269" key="15">
    <source>
    </source>
</evidence>
<evidence type="ECO:0000269" key="16">
    <source>
    </source>
</evidence>
<evidence type="ECO:0000269" key="17">
    <source>
    </source>
</evidence>
<evidence type="ECO:0000269" key="18">
    <source>
    </source>
</evidence>
<evidence type="ECO:0000269" key="19">
    <source>
    </source>
</evidence>
<evidence type="ECO:0000269" key="20">
    <source>
    </source>
</evidence>
<evidence type="ECO:0000269" key="21">
    <source>
    </source>
</evidence>
<evidence type="ECO:0000305" key="22"/>
<evidence type="ECO:0007744" key="23">
    <source>
        <dbReference type="PDB" id="3JAG"/>
    </source>
</evidence>
<evidence type="ECO:0007744" key="24">
    <source>
        <dbReference type="PDB" id="3JAH"/>
    </source>
</evidence>
<evidence type="ECO:0007744" key="25">
    <source>
        <dbReference type="PDB" id="4D5L"/>
    </source>
</evidence>
<evidence type="ECO:0007744" key="26">
    <source>
        <dbReference type="PDB" id="4D61"/>
    </source>
</evidence>
<evidence type="ECO:0007744" key="27">
    <source>
        <dbReference type="PDB" id="4KZX"/>
    </source>
</evidence>
<evidence type="ECO:0007744" key="28">
    <source>
        <dbReference type="PDB" id="4KZY"/>
    </source>
</evidence>
<evidence type="ECO:0007744" key="29">
    <source>
        <dbReference type="PDB" id="5LZS"/>
    </source>
</evidence>
<evidence type="ECO:0007744" key="30">
    <source>
        <dbReference type="PDB" id="5LZT"/>
    </source>
</evidence>
<evidence type="ECO:0007744" key="31">
    <source>
        <dbReference type="PDB" id="6D90"/>
    </source>
</evidence>
<evidence type="ECO:0007744" key="32">
    <source>
        <dbReference type="PDB" id="6D9J"/>
    </source>
</evidence>
<evidence type="ECO:0007744" key="33">
    <source>
        <dbReference type="PDB" id="6GZ3"/>
    </source>
</evidence>
<evidence type="ECO:0007744" key="34">
    <source>
        <dbReference type="PDB" id="6HCF"/>
    </source>
</evidence>
<evidence type="ECO:0007744" key="35">
    <source>
        <dbReference type="PDB" id="6HCJ"/>
    </source>
</evidence>
<evidence type="ECO:0007744" key="36">
    <source>
        <dbReference type="PDB" id="6MTB"/>
    </source>
</evidence>
<evidence type="ECO:0007744" key="37">
    <source>
        <dbReference type="PDB" id="6MTC"/>
    </source>
</evidence>
<evidence type="ECO:0007744" key="38">
    <source>
        <dbReference type="PDB" id="6P4G"/>
    </source>
</evidence>
<evidence type="ECO:0007744" key="39">
    <source>
        <dbReference type="PDB" id="6P4H"/>
    </source>
</evidence>
<evidence type="ECO:0007744" key="40">
    <source>
        <dbReference type="PDB" id="6R5Q"/>
    </source>
</evidence>
<evidence type="ECO:0007744" key="41">
    <source>
        <dbReference type="PDB" id="6R6G"/>
    </source>
</evidence>
<evidence type="ECO:0007744" key="42">
    <source>
        <dbReference type="PDB" id="6SGC"/>
    </source>
</evidence>
<evidence type="ECO:0007744" key="43">
    <source>
        <dbReference type="PDB" id="6W2S"/>
    </source>
</evidence>
<evidence type="ECO:0007744" key="44">
    <source>
        <dbReference type="PDB" id="6W2T"/>
    </source>
</evidence>
<evidence type="ECO:0007744" key="45">
    <source>
        <dbReference type="PDB" id="6ZVK"/>
    </source>
</evidence>
<evidence type="ECO:0007744" key="46">
    <source>
        <dbReference type="PDB" id="7A01"/>
    </source>
</evidence>
<evidence type="ECO:0007744" key="47">
    <source>
        <dbReference type="PDB" id="7OYD"/>
    </source>
</evidence>
<evidence type="ECO:0007744" key="48">
    <source>
        <dbReference type="PDB" id="7SYO"/>
    </source>
</evidence>
<evidence type="ECO:0007744" key="49">
    <source>
        <dbReference type="PDB" id="7SYP"/>
    </source>
</evidence>
<evidence type="ECO:0007744" key="50">
    <source>
        <dbReference type="PDB" id="7UCJ"/>
    </source>
</evidence>
<evidence type="ECO:0007744" key="51">
    <source>
        <dbReference type="PDB" id="7UCK"/>
    </source>
</evidence>
<evidence type="ECO:0007744" key="52">
    <source>
        <dbReference type="PDB" id="7ZJW"/>
    </source>
</evidence>
<evidence type="ECO:0007744" key="53">
    <source>
        <dbReference type="PDB" id="7ZJX"/>
    </source>
</evidence>
<evidence type="ECO:0007829" key="54">
    <source>
        <dbReference type="PDB" id="6YAL"/>
    </source>
</evidence>
<evidence type="ECO:0007829" key="55">
    <source>
        <dbReference type="PDB" id="6YAN"/>
    </source>
</evidence>
<evidence type="ECO:0007829" key="56">
    <source>
        <dbReference type="PDB" id="7JQB"/>
    </source>
</evidence>
<evidence type="ECO:0007829" key="57">
    <source>
        <dbReference type="PDB" id="8P03"/>
    </source>
</evidence>
<evidence type="ECO:0007829" key="58">
    <source>
        <dbReference type="PDB" id="8P09"/>
    </source>
</evidence>
<proteinExistence type="evidence at protein level"/>
<keyword id="KW-0002">3D-structure</keyword>
<keyword id="KW-0007">Acetylation</keyword>
<keyword id="KW-0963">Cytoplasm</keyword>
<keyword id="KW-1017">Isopeptide bond</keyword>
<keyword id="KW-0539">Nucleus</keyword>
<keyword id="KW-0597">Phosphoprotein</keyword>
<keyword id="KW-1185">Reference proteome</keyword>
<keyword id="KW-0687">Ribonucleoprotein</keyword>
<keyword id="KW-0689">Ribosomal protein</keyword>
<keyword id="KW-0694">RNA-binding</keyword>
<keyword id="KW-0699">rRNA-binding</keyword>
<keyword id="KW-0832">Ubl conjugation</keyword>
<name>RS9_RABIT</name>
<protein>
    <recommendedName>
        <fullName evidence="22">Small ribosomal subunit protein uS4</fullName>
    </recommendedName>
    <alternativeName>
        <fullName evidence="22">40S ribosomal protein S9</fullName>
    </alternativeName>
</protein>
<comment type="function">
    <text evidence="1 5 6 8 12">Component of the small ribosomal subunit (PubMed:23873042, PubMed:25601755, PubMed:27863242, PubMed:30517857). The ribosome is a large ribonucleoprotein complex responsible for the synthesis of proteins in the cell (PubMed:23873042, PubMed:25601755, PubMed:27863242, PubMed:30517857). Part of the small subunit (SSU) processome, first precursor of the small eukaryotic ribosomal subunit (PubMed:23873042, PubMed:25601755, PubMed:27863242, PubMed:30517857). During the assembly of the SSU processome in the nucleolus, many ribosome biogenesis factors, an RNA chaperone and ribosomal proteins associate with the nascent pre-rRNA and work in concert to generate RNA folding, modifications, rearrangements and cleavage as well as targeted degradation of pre-ribosomal RNA by the RNA exosome (By similarity).</text>
</comment>
<comment type="subunit">
    <text evidence="5 6 7 8 9 10 11 12 13 14 15 16 17 18 19 20 21">Component of the small ribosomal subunit. Identified in a IGF2BP1-dependent mRNP granule complex containing untranslated mRNAs (PubMed:23873042, PubMed:25601755, PubMed:26245381, PubMed:27863242, PubMed:29856316, PubMed:30293783, PubMed:30355441, PubMed:30517857, PubMed:31246176, PubMed:31609474, PubMed:31768042, PubMed:32286223, PubMed:33296660, PubMed:35679869, PubMed:35709277, PubMed:35822879, PubMed:36653451). Part of the small subunit (SSU) processome, composed of more than 70 proteins and the RNA chaperone small nucleolar RNA (snoRNA) U3 (PubMed:23873042, PubMed:25601755, PubMed:26245381, PubMed:27863242, PubMed:29856316, PubMed:30293783, PubMed:30355441, PubMed:30517857, PubMed:31246176, PubMed:31609474, PubMed:31768042, PubMed:32286223, PubMed:33296660, PubMed:35679869, PubMed:35709277, PubMed:35822879, PubMed:36653451).</text>
</comment>
<comment type="subcellular location">
    <subcellularLocation>
        <location evidence="5 6 7 8 9 10 11 12 13 14 15 16 17 18 19 20 21">Cytoplasm</location>
    </subcellularLocation>
    <subcellularLocation>
        <location evidence="1">Nucleus</location>
        <location evidence="1">Nucleolus</location>
    </subcellularLocation>
    <text evidence="1">Localized in cytoplasmic mRNP granules containing untranslated mRNAs.</text>
</comment>
<comment type="similarity">
    <text evidence="22">Belongs to the universal ribosomal protein uS4 family.</text>
</comment>